<feature type="chain" id="PRO_0000340677" description="Triple QxxK/R motif-containing protein">
    <location>
        <begin position="1"/>
        <end position="84"/>
    </location>
</feature>
<feature type="transmembrane region" description="Helical" evidence="2">
    <location>
        <begin position="51"/>
        <end position="71"/>
    </location>
</feature>
<feature type="sequence conflict" description="In Ref. 1; ABC84192." evidence="4" ref="1">
    <original>D</original>
    <variation>N</variation>
    <location>
        <position position="84"/>
    </location>
</feature>
<accession>A5WVU9</accession>
<accession>B2B9E2</accession>
<proteinExistence type="evidence at transcript level"/>
<dbReference type="EMBL" id="DQ351293">
    <property type="protein sequence ID" value="ABC84192.1"/>
    <property type="molecule type" value="mRNA"/>
</dbReference>
<dbReference type="EMBL" id="CT027830">
    <property type="protein sequence ID" value="CAN88662.1"/>
    <property type="molecule type" value="Genomic_DNA"/>
</dbReference>
<dbReference type="RefSeq" id="NP_001120728.2">
    <property type="nucleotide sequence ID" value="NM_001127256.3"/>
</dbReference>
<dbReference type="SMR" id="A5WVU9"/>
<dbReference type="FunCoup" id="A5WVU9">
    <property type="interactions" value="722"/>
</dbReference>
<dbReference type="STRING" id="7955.ENSDARP00000122282"/>
<dbReference type="PaxDb" id="7955-ENSDARP00000122282"/>
<dbReference type="Ensembl" id="ENSDART00000142275">
    <property type="protein sequence ID" value="ENSDARP00000122282"/>
    <property type="gene ID" value="ENSDARG00000076296"/>
</dbReference>
<dbReference type="Ensembl" id="ENSDART00000181800">
    <property type="protein sequence ID" value="ENSDARP00000152272"/>
    <property type="gene ID" value="ENSDARG00000076296"/>
</dbReference>
<dbReference type="GeneID" id="100147776"/>
<dbReference type="KEGG" id="dre:100147776"/>
<dbReference type="AGR" id="ZFIN:ZDB-GENE-070705-75"/>
<dbReference type="CTD" id="286144"/>
<dbReference type="ZFIN" id="ZDB-GENE-070705-75">
    <property type="gene designation" value="triqk"/>
</dbReference>
<dbReference type="eggNOG" id="ENOG502S3QR">
    <property type="taxonomic scope" value="Eukaryota"/>
</dbReference>
<dbReference type="HOGENOM" id="CLU_191636_0_0_1"/>
<dbReference type="InParanoid" id="A5WVU9"/>
<dbReference type="OMA" id="NIGKQDY"/>
<dbReference type="OrthoDB" id="10049402at2759"/>
<dbReference type="PhylomeDB" id="A5WVU9"/>
<dbReference type="TreeFam" id="TF328583"/>
<dbReference type="PRO" id="PR:A5WVU9"/>
<dbReference type="Proteomes" id="UP000000437">
    <property type="component" value="Chromosome 19"/>
</dbReference>
<dbReference type="Bgee" id="ENSDARG00000076296">
    <property type="expression patterns" value="Expressed in early embryo and 25 other cell types or tissues"/>
</dbReference>
<dbReference type="GO" id="GO:0005789">
    <property type="term" value="C:endoplasmic reticulum membrane"/>
    <property type="evidence" value="ECO:0007669"/>
    <property type="project" value="UniProtKB-SubCell"/>
</dbReference>
<dbReference type="InterPro" id="IPR024842">
    <property type="entry name" value="TRIQK"/>
</dbReference>
<dbReference type="PANTHER" id="PTHR20583">
    <property type="entry name" value="TRIPLE QXXK/R MOTIF-CONTAINING PROTEIN"/>
    <property type="match status" value="1"/>
</dbReference>
<dbReference type="PANTHER" id="PTHR20583:SF1">
    <property type="entry name" value="TRIPLE QXXK_R MOTIF-CONTAINING PROTEIN"/>
    <property type="match status" value="1"/>
</dbReference>
<dbReference type="Pfam" id="PF15168">
    <property type="entry name" value="TRIQK"/>
    <property type="match status" value="1"/>
</dbReference>
<comment type="function">
    <text evidence="1">May play a role in cell growth and maintenance of cell morphology.</text>
</comment>
<comment type="subcellular location">
    <subcellularLocation>
        <location evidence="1">Endoplasmic reticulum membrane</location>
        <topology evidence="1">Single-pass membrane protein</topology>
    </subcellularLocation>
</comment>
<comment type="developmental stage">
    <text evidence="3">Expressed from the oblong to the hatching stage.</text>
</comment>
<comment type="similarity">
    <text evidence="4">Belongs to the TRIQK family.</text>
</comment>
<sequence length="84" mass="9500">MGKKDASSVKLPVDQYRKQIGKQDYKKTKPVLRATRLKAEAKRSAPGIRDIILVIVAVLLFLLGVYAFFYLNLSTELDLDVDMD</sequence>
<keyword id="KW-0256">Endoplasmic reticulum</keyword>
<keyword id="KW-0472">Membrane</keyword>
<keyword id="KW-1185">Reference proteome</keyword>
<keyword id="KW-0812">Transmembrane</keyword>
<keyword id="KW-1133">Transmembrane helix</keyword>
<organism>
    <name type="scientific">Danio rerio</name>
    <name type="common">Zebrafish</name>
    <name type="synonym">Brachydanio rerio</name>
    <dbReference type="NCBI Taxonomy" id="7955"/>
    <lineage>
        <taxon>Eukaryota</taxon>
        <taxon>Metazoa</taxon>
        <taxon>Chordata</taxon>
        <taxon>Craniata</taxon>
        <taxon>Vertebrata</taxon>
        <taxon>Euteleostomi</taxon>
        <taxon>Actinopterygii</taxon>
        <taxon>Neopterygii</taxon>
        <taxon>Teleostei</taxon>
        <taxon>Ostariophysi</taxon>
        <taxon>Cypriniformes</taxon>
        <taxon>Danionidae</taxon>
        <taxon>Danioninae</taxon>
        <taxon>Danio</taxon>
    </lineage>
</organism>
<gene>
    <name type="primary">triqk</name>
    <name type="ORF">si:ch211-160k22.1</name>
</gene>
<name>TRIQK_DANRE</name>
<protein>
    <recommendedName>
        <fullName>Triple QxxK/R motif-containing protein</fullName>
    </recommendedName>
    <alternativeName>
        <fullName>Triple repetitive-sequence of QXXK/R protein homolog</fullName>
    </alternativeName>
</protein>
<evidence type="ECO:0000250" key="1"/>
<evidence type="ECO:0000255" key="2"/>
<evidence type="ECO:0000269" key="3">
    <source>
    </source>
</evidence>
<evidence type="ECO:0000305" key="4"/>
<reference key="1">
    <citation type="journal article" date="2008" name="Zool. Sci.">
        <title>TRIQK, a novel family of small proteins localized to the endoplasmic reticulum membrane, is conserved across vertebrates.</title>
        <authorList>
            <person name="Onuma Y."/>
            <person name="Watanabe A."/>
            <person name="Aburatani H."/>
            <person name="Asashima M."/>
            <person name="Whitman M."/>
        </authorList>
    </citation>
    <scope>NUCLEOTIDE SEQUENCE [MRNA]</scope>
    <scope>DEVELOPMENTAL STAGE</scope>
    <source>
        <tissue>Egg</tissue>
    </source>
</reference>
<reference key="2">
    <citation type="journal article" date="2013" name="Nature">
        <title>The zebrafish reference genome sequence and its relationship to the human genome.</title>
        <authorList>
            <person name="Howe K."/>
            <person name="Clark M.D."/>
            <person name="Torroja C.F."/>
            <person name="Torrance J."/>
            <person name="Berthelot C."/>
            <person name="Muffato M."/>
            <person name="Collins J.E."/>
            <person name="Humphray S."/>
            <person name="McLaren K."/>
            <person name="Matthews L."/>
            <person name="McLaren S."/>
            <person name="Sealy I."/>
            <person name="Caccamo M."/>
            <person name="Churcher C."/>
            <person name="Scott C."/>
            <person name="Barrett J.C."/>
            <person name="Koch R."/>
            <person name="Rauch G.J."/>
            <person name="White S."/>
            <person name="Chow W."/>
            <person name="Kilian B."/>
            <person name="Quintais L.T."/>
            <person name="Guerra-Assuncao J.A."/>
            <person name="Zhou Y."/>
            <person name="Gu Y."/>
            <person name="Yen J."/>
            <person name="Vogel J.H."/>
            <person name="Eyre T."/>
            <person name="Redmond S."/>
            <person name="Banerjee R."/>
            <person name="Chi J."/>
            <person name="Fu B."/>
            <person name="Langley E."/>
            <person name="Maguire S.F."/>
            <person name="Laird G.K."/>
            <person name="Lloyd D."/>
            <person name="Kenyon E."/>
            <person name="Donaldson S."/>
            <person name="Sehra H."/>
            <person name="Almeida-King J."/>
            <person name="Loveland J."/>
            <person name="Trevanion S."/>
            <person name="Jones M."/>
            <person name="Quail M."/>
            <person name="Willey D."/>
            <person name="Hunt A."/>
            <person name="Burton J."/>
            <person name="Sims S."/>
            <person name="McLay K."/>
            <person name="Plumb B."/>
            <person name="Davis J."/>
            <person name="Clee C."/>
            <person name="Oliver K."/>
            <person name="Clark R."/>
            <person name="Riddle C."/>
            <person name="Elliot D."/>
            <person name="Threadgold G."/>
            <person name="Harden G."/>
            <person name="Ware D."/>
            <person name="Begum S."/>
            <person name="Mortimore B."/>
            <person name="Kerry G."/>
            <person name="Heath P."/>
            <person name="Phillimore B."/>
            <person name="Tracey A."/>
            <person name="Corby N."/>
            <person name="Dunn M."/>
            <person name="Johnson C."/>
            <person name="Wood J."/>
            <person name="Clark S."/>
            <person name="Pelan S."/>
            <person name="Griffiths G."/>
            <person name="Smith M."/>
            <person name="Glithero R."/>
            <person name="Howden P."/>
            <person name="Barker N."/>
            <person name="Lloyd C."/>
            <person name="Stevens C."/>
            <person name="Harley J."/>
            <person name="Holt K."/>
            <person name="Panagiotidis G."/>
            <person name="Lovell J."/>
            <person name="Beasley H."/>
            <person name="Henderson C."/>
            <person name="Gordon D."/>
            <person name="Auger K."/>
            <person name="Wright D."/>
            <person name="Collins J."/>
            <person name="Raisen C."/>
            <person name="Dyer L."/>
            <person name="Leung K."/>
            <person name="Robertson L."/>
            <person name="Ambridge K."/>
            <person name="Leongamornlert D."/>
            <person name="McGuire S."/>
            <person name="Gilderthorp R."/>
            <person name="Griffiths C."/>
            <person name="Manthravadi D."/>
            <person name="Nichol S."/>
            <person name="Barker G."/>
            <person name="Whitehead S."/>
            <person name="Kay M."/>
            <person name="Brown J."/>
            <person name="Murnane C."/>
            <person name="Gray E."/>
            <person name="Humphries M."/>
            <person name="Sycamore N."/>
            <person name="Barker D."/>
            <person name="Saunders D."/>
            <person name="Wallis J."/>
            <person name="Babbage A."/>
            <person name="Hammond S."/>
            <person name="Mashreghi-Mohammadi M."/>
            <person name="Barr L."/>
            <person name="Martin S."/>
            <person name="Wray P."/>
            <person name="Ellington A."/>
            <person name="Matthews N."/>
            <person name="Ellwood M."/>
            <person name="Woodmansey R."/>
            <person name="Clark G."/>
            <person name="Cooper J."/>
            <person name="Tromans A."/>
            <person name="Grafham D."/>
            <person name="Skuce C."/>
            <person name="Pandian R."/>
            <person name="Andrews R."/>
            <person name="Harrison E."/>
            <person name="Kimberley A."/>
            <person name="Garnett J."/>
            <person name="Fosker N."/>
            <person name="Hall R."/>
            <person name="Garner P."/>
            <person name="Kelly D."/>
            <person name="Bird C."/>
            <person name="Palmer S."/>
            <person name="Gehring I."/>
            <person name="Berger A."/>
            <person name="Dooley C.M."/>
            <person name="Ersan-Urun Z."/>
            <person name="Eser C."/>
            <person name="Geiger H."/>
            <person name="Geisler M."/>
            <person name="Karotki L."/>
            <person name="Kirn A."/>
            <person name="Konantz J."/>
            <person name="Konantz M."/>
            <person name="Oberlander M."/>
            <person name="Rudolph-Geiger S."/>
            <person name="Teucke M."/>
            <person name="Lanz C."/>
            <person name="Raddatz G."/>
            <person name="Osoegawa K."/>
            <person name="Zhu B."/>
            <person name="Rapp A."/>
            <person name="Widaa S."/>
            <person name="Langford C."/>
            <person name="Yang F."/>
            <person name="Schuster S.C."/>
            <person name="Carter N.P."/>
            <person name="Harrow J."/>
            <person name="Ning Z."/>
            <person name="Herrero J."/>
            <person name="Searle S.M."/>
            <person name="Enright A."/>
            <person name="Geisler R."/>
            <person name="Plasterk R.H."/>
            <person name="Lee C."/>
            <person name="Westerfield M."/>
            <person name="de Jong P.J."/>
            <person name="Zon L.I."/>
            <person name="Postlethwait J.H."/>
            <person name="Nusslein-Volhard C."/>
            <person name="Hubbard T.J."/>
            <person name="Roest Crollius H."/>
            <person name="Rogers J."/>
            <person name="Stemple D.L."/>
        </authorList>
    </citation>
    <scope>NUCLEOTIDE SEQUENCE [LARGE SCALE GENOMIC DNA]</scope>
    <source>
        <strain>Tuebingen</strain>
    </source>
</reference>